<protein>
    <recommendedName>
        <fullName>Polyadenylate-binding protein, cytoplasmic and nuclear</fullName>
        <shortName>PABP</shortName>
        <shortName>Poly(A)-binding protein</shortName>
    </recommendedName>
    <alternativeName>
        <fullName>Polyadenylate tail-binding protein</fullName>
    </alternativeName>
</protein>
<reference key="1">
    <citation type="journal article" date="2007" name="Plant Cell">
        <title>Dothideomycete-plant interactions illuminated by genome sequencing and EST analysis of the wheat pathogen Stagonospora nodorum.</title>
        <authorList>
            <person name="Hane J.K."/>
            <person name="Lowe R.G.T."/>
            <person name="Solomon P.S."/>
            <person name="Tan K.-C."/>
            <person name="Schoch C.L."/>
            <person name="Spatafora J.W."/>
            <person name="Crous P.W."/>
            <person name="Kodira C.D."/>
            <person name="Birren B.W."/>
            <person name="Galagan J.E."/>
            <person name="Torriani S.F.F."/>
            <person name="McDonald B.A."/>
            <person name="Oliver R.P."/>
        </authorList>
    </citation>
    <scope>NUCLEOTIDE SEQUENCE [LARGE SCALE GENOMIC DNA]</scope>
    <source>
        <strain>SN15 / ATCC MYA-4574 / FGSC 10173</strain>
    </source>
</reference>
<evidence type="ECO:0000250" key="1"/>
<evidence type="ECO:0000255" key="2">
    <source>
        <dbReference type="PROSITE-ProRule" id="PRU00176"/>
    </source>
</evidence>
<evidence type="ECO:0000255" key="3">
    <source>
        <dbReference type="PROSITE-ProRule" id="PRU00641"/>
    </source>
</evidence>
<evidence type="ECO:0000256" key="4">
    <source>
        <dbReference type="SAM" id="MobiDB-lite"/>
    </source>
</evidence>
<evidence type="ECO:0000305" key="5"/>
<proteinExistence type="inferred from homology"/>
<keyword id="KW-0963">Cytoplasm</keyword>
<keyword id="KW-0507">mRNA processing</keyword>
<keyword id="KW-0509">mRNA transport</keyword>
<keyword id="KW-0539">Nucleus</keyword>
<keyword id="KW-0677">Repeat</keyword>
<keyword id="KW-0694">RNA-binding</keyword>
<keyword id="KW-0810">Translation regulation</keyword>
<keyword id="KW-0813">Transport</keyword>
<comment type="function">
    <text evidence="1">Binds the poly(A) tail of mRNA. Appears to be an important mediator of the multiple roles of the poly(A) tail in mRNA biogenesis, stability and translation. In the nucleus, involved in both mRNA cleavage and polyadenylation. Is also required for efficient mRNA export to the cytoplasm. Acts in concert with a poly(A)-specific nuclease (PAN) to affect poly(A) tail shortening, which may occur concomitantly with either nucleocytoplasmic mRNA transport or translational initiation. In the cytoplasm, stimulates translation initiation and regulates mRNA decay through translation termination-coupled poly(A) shortening, probably mediated by PAN (By similarity).</text>
</comment>
<comment type="subcellular location">
    <subcellularLocation>
        <location evidence="1">Cytoplasm</location>
    </subcellularLocation>
    <subcellularLocation>
        <location evidence="1">Nucleus</location>
    </subcellularLocation>
</comment>
<comment type="similarity">
    <text evidence="5">Belongs to the polyadenylate-binding protein type-1 family.</text>
</comment>
<name>PABP_PHANO</name>
<feature type="chain" id="PRO_0000295397" description="Polyadenylate-binding protein, cytoplasmic and nuclear">
    <location>
        <begin position="1"/>
        <end position="744"/>
    </location>
</feature>
<feature type="domain" description="RRM 1" evidence="2">
    <location>
        <begin position="48"/>
        <end position="126"/>
    </location>
</feature>
<feature type="domain" description="RRM 2" evidence="2">
    <location>
        <begin position="136"/>
        <end position="213"/>
    </location>
</feature>
<feature type="domain" description="RRM 3" evidence="2">
    <location>
        <begin position="229"/>
        <end position="306"/>
    </location>
</feature>
<feature type="domain" description="RRM 4" evidence="2">
    <location>
        <begin position="332"/>
        <end position="462"/>
    </location>
</feature>
<feature type="domain" description="PABC" evidence="3">
    <location>
        <begin position="647"/>
        <end position="724"/>
    </location>
</feature>
<feature type="region of interest" description="Disordered" evidence="4">
    <location>
        <begin position="1"/>
        <end position="42"/>
    </location>
</feature>
<feature type="region of interest" description="Disordered" evidence="4">
    <location>
        <begin position="368"/>
        <end position="411"/>
    </location>
</feature>
<feature type="region of interest" description="Disordered" evidence="4">
    <location>
        <begin position="527"/>
        <end position="550"/>
    </location>
</feature>
<feature type="region of interest" description="Disordered" evidence="4">
    <location>
        <begin position="607"/>
        <end position="651"/>
    </location>
</feature>
<feature type="region of interest" description="Disordered" evidence="4">
    <location>
        <begin position="723"/>
        <end position="744"/>
    </location>
</feature>
<feature type="compositionally biased region" description="Polar residues" evidence="4">
    <location>
        <begin position="1"/>
        <end position="11"/>
    </location>
</feature>
<feature type="compositionally biased region" description="Low complexity" evidence="4">
    <location>
        <begin position="33"/>
        <end position="42"/>
    </location>
</feature>
<feature type="compositionally biased region" description="Basic and acidic residues" evidence="4">
    <location>
        <begin position="376"/>
        <end position="397"/>
    </location>
</feature>
<feature type="compositionally biased region" description="Gly residues" evidence="4">
    <location>
        <begin position="527"/>
        <end position="545"/>
    </location>
</feature>
<feature type="compositionally biased region" description="Gly residues" evidence="4">
    <location>
        <begin position="609"/>
        <end position="632"/>
    </location>
</feature>
<feature type="compositionally biased region" description="Gly residues" evidence="4">
    <location>
        <begin position="640"/>
        <end position="649"/>
    </location>
</feature>
<gene>
    <name type="primary">PAB1</name>
    <name type="ORF">SNOG_14351</name>
</gene>
<dbReference type="EMBL" id="CH445355">
    <property type="protein sequence ID" value="EAT78222.2"/>
    <property type="molecule type" value="Genomic_DNA"/>
</dbReference>
<dbReference type="RefSeq" id="XP_001804541.1">
    <property type="nucleotide sequence ID" value="XM_001804489.1"/>
</dbReference>
<dbReference type="SMR" id="Q0U1G2"/>
<dbReference type="FunCoup" id="Q0U1G2">
    <property type="interactions" value="1181"/>
</dbReference>
<dbReference type="STRING" id="321614.Q0U1G2"/>
<dbReference type="EnsemblFungi" id="SNOT_14351">
    <property type="protein sequence ID" value="SNOT_14351"/>
    <property type="gene ID" value="SNOG_14351"/>
</dbReference>
<dbReference type="GeneID" id="5981465"/>
<dbReference type="KEGG" id="pno:SNOG_14351"/>
<dbReference type="VEuPathDB" id="FungiDB:JI435_143510"/>
<dbReference type="eggNOG" id="KOG0123">
    <property type="taxonomic scope" value="Eukaryota"/>
</dbReference>
<dbReference type="HOGENOM" id="CLU_012062_22_4_1"/>
<dbReference type="InParanoid" id="Q0U1G2"/>
<dbReference type="Proteomes" id="UP000001055">
    <property type="component" value="Unassembled WGS sequence"/>
</dbReference>
<dbReference type="GO" id="GO:0010494">
    <property type="term" value="C:cytoplasmic stress granule"/>
    <property type="evidence" value="ECO:0000318"/>
    <property type="project" value="GO_Central"/>
</dbReference>
<dbReference type="GO" id="GO:0005829">
    <property type="term" value="C:cytosol"/>
    <property type="evidence" value="ECO:0000318"/>
    <property type="project" value="GO_Central"/>
</dbReference>
<dbReference type="GO" id="GO:0005634">
    <property type="term" value="C:nucleus"/>
    <property type="evidence" value="ECO:0000318"/>
    <property type="project" value="GO_Central"/>
</dbReference>
<dbReference type="GO" id="GO:1990904">
    <property type="term" value="C:ribonucleoprotein complex"/>
    <property type="evidence" value="ECO:0000318"/>
    <property type="project" value="GO_Central"/>
</dbReference>
<dbReference type="GO" id="GO:0003730">
    <property type="term" value="F:mRNA 3'-UTR binding"/>
    <property type="evidence" value="ECO:0000318"/>
    <property type="project" value="GO_Central"/>
</dbReference>
<dbReference type="GO" id="GO:0008143">
    <property type="term" value="F:poly(A) binding"/>
    <property type="evidence" value="ECO:0000318"/>
    <property type="project" value="GO_Central"/>
</dbReference>
<dbReference type="GO" id="GO:0008266">
    <property type="term" value="F:poly(U) RNA binding"/>
    <property type="evidence" value="ECO:0000318"/>
    <property type="project" value="GO_Central"/>
</dbReference>
<dbReference type="GO" id="GO:0006397">
    <property type="term" value="P:mRNA processing"/>
    <property type="evidence" value="ECO:0007669"/>
    <property type="project" value="UniProtKB-KW"/>
</dbReference>
<dbReference type="GO" id="GO:0051028">
    <property type="term" value="P:mRNA transport"/>
    <property type="evidence" value="ECO:0007669"/>
    <property type="project" value="UniProtKB-KW"/>
</dbReference>
<dbReference type="GO" id="GO:0006417">
    <property type="term" value="P:regulation of translation"/>
    <property type="evidence" value="ECO:0007669"/>
    <property type="project" value="UniProtKB-KW"/>
</dbReference>
<dbReference type="CDD" id="cd12378">
    <property type="entry name" value="RRM1_I_PABPs"/>
    <property type="match status" value="1"/>
</dbReference>
<dbReference type="CDD" id="cd12379">
    <property type="entry name" value="RRM2_I_PABPs"/>
    <property type="match status" value="1"/>
</dbReference>
<dbReference type="CDD" id="cd12380">
    <property type="entry name" value="RRM3_I_PABPs"/>
    <property type="match status" value="1"/>
</dbReference>
<dbReference type="CDD" id="cd12381">
    <property type="entry name" value="RRM4_I_PABPs"/>
    <property type="match status" value="1"/>
</dbReference>
<dbReference type="FunFam" id="1.10.1900.10:FF:000004">
    <property type="entry name" value="Polyadenylate-binding protein"/>
    <property type="match status" value="1"/>
</dbReference>
<dbReference type="FunFam" id="3.30.70.330:FF:000003">
    <property type="entry name" value="Polyadenylate-binding protein"/>
    <property type="match status" value="1"/>
</dbReference>
<dbReference type="FunFam" id="3.30.70.330:FF:000355">
    <property type="entry name" value="Polyadenylate-binding protein"/>
    <property type="match status" value="1"/>
</dbReference>
<dbReference type="FunFam" id="3.30.70.330:FF:000384">
    <property type="entry name" value="Polyadenylate-binding protein"/>
    <property type="match status" value="1"/>
</dbReference>
<dbReference type="Gene3D" id="3.30.70.330">
    <property type="match status" value="4"/>
</dbReference>
<dbReference type="Gene3D" id="1.10.1900.10">
    <property type="entry name" value="c-terminal domain of poly(a) binding protein"/>
    <property type="match status" value="1"/>
</dbReference>
<dbReference type="InterPro" id="IPR012677">
    <property type="entry name" value="Nucleotide-bd_a/b_plait_sf"/>
</dbReference>
<dbReference type="InterPro" id="IPR036053">
    <property type="entry name" value="PABP-dom"/>
</dbReference>
<dbReference type="InterPro" id="IPR006515">
    <property type="entry name" value="PABP_1234"/>
</dbReference>
<dbReference type="InterPro" id="IPR002004">
    <property type="entry name" value="PABP_HYD_C"/>
</dbReference>
<dbReference type="InterPro" id="IPR034364">
    <property type="entry name" value="PABP_RRM1"/>
</dbReference>
<dbReference type="InterPro" id="IPR035979">
    <property type="entry name" value="RBD_domain_sf"/>
</dbReference>
<dbReference type="InterPro" id="IPR045305">
    <property type="entry name" value="RRM2_I_PABPs"/>
</dbReference>
<dbReference type="InterPro" id="IPR000504">
    <property type="entry name" value="RRM_dom"/>
</dbReference>
<dbReference type="InterPro" id="IPR003954">
    <property type="entry name" value="RRM_dom_euk"/>
</dbReference>
<dbReference type="NCBIfam" id="TIGR01628">
    <property type="entry name" value="PABP-1234"/>
    <property type="match status" value="1"/>
</dbReference>
<dbReference type="PANTHER" id="PTHR24012">
    <property type="entry name" value="RNA BINDING PROTEIN"/>
    <property type="match status" value="1"/>
</dbReference>
<dbReference type="Pfam" id="PF00658">
    <property type="entry name" value="MLLE"/>
    <property type="match status" value="1"/>
</dbReference>
<dbReference type="Pfam" id="PF00076">
    <property type="entry name" value="RRM_1"/>
    <property type="match status" value="5"/>
</dbReference>
<dbReference type="SMART" id="SM00517">
    <property type="entry name" value="PolyA"/>
    <property type="match status" value="1"/>
</dbReference>
<dbReference type="SMART" id="SM00360">
    <property type="entry name" value="RRM"/>
    <property type="match status" value="4"/>
</dbReference>
<dbReference type="SMART" id="SM00361">
    <property type="entry name" value="RRM_1"/>
    <property type="match status" value="3"/>
</dbReference>
<dbReference type="SUPFAM" id="SSF63570">
    <property type="entry name" value="PABC (PABP) domain"/>
    <property type="match status" value="1"/>
</dbReference>
<dbReference type="SUPFAM" id="SSF54928">
    <property type="entry name" value="RNA-binding domain, RBD"/>
    <property type="match status" value="3"/>
</dbReference>
<dbReference type="PROSITE" id="PS51309">
    <property type="entry name" value="PABC"/>
    <property type="match status" value="1"/>
</dbReference>
<dbReference type="PROSITE" id="PS50102">
    <property type="entry name" value="RRM"/>
    <property type="match status" value="4"/>
</dbReference>
<accession>Q0U1G2</accession>
<organism>
    <name type="scientific">Phaeosphaeria nodorum (strain SN15 / ATCC MYA-4574 / FGSC 10173)</name>
    <name type="common">Glume blotch fungus</name>
    <name type="synonym">Parastagonospora nodorum</name>
    <dbReference type="NCBI Taxonomy" id="321614"/>
    <lineage>
        <taxon>Eukaryota</taxon>
        <taxon>Fungi</taxon>
        <taxon>Dikarya</taxon>
        <taxon>Ascomycota</taxon>
        <taxon>Pezizomycotina</taxon>
        <taxon>Dothideomycetes</taxon>
        <taxon>Pleosporomycetidae</taxon>
        <taxon>Pleosporales</taxon>
        <taxon>Pleosporineae</taxon>
        <taxon>Phaeosphaeriaceae</taxon>
        <taxon>Parastagonospora</taxon>
    </lineage>
</organism>
<sequence>MSEVANSTSPVQDGADANGAQINTNVPAASGDAPTPTTAAQQAHQNSASLYVGELDPSVTEAMLFELFSSIGQVASIRVCRDAVTRRSLGYAYVNYNSSEDGEKALEELNYTVIKGKPCRIMWSQRDPALRKTGQGNVFIKNLDHAIDNKALHDTFAAFGNILSCKVAQDELGNSKGYGFVHYETAEAANNAIKHVNGMLLNEKKVFVGHHIPKKERMSKFEEMKANFTNIYVKNIDLDVTDEDFRELFEKHGDITSASIARDDQGKSRGFGFVNYIRHEAAAVAVDHLNDIEFKGQKLYVGRAQKKHEREEELRKQYEAARLEKQSKYQGVNLYIKNLNDDVDDEKLRDMFTPFGTITSAKVILRDEEKKDEEEKEVKEEKKEDEKKEDEEAKEGSSSEQNGEDTKAGDKVTIKGEKKILGKSKGFGFVCFSNPDEATKAVTEMNQKMIEGKPLYVALAQRKDVRKNQLEATIQARNQLRMQQQQQQQFGGIPQMFIAPGQQPMMYPPGARGQMPFPAGMPGAQGGRGAGFPGGMPGQQGGRGGPNAQQMPPMYMPPGMAPGAFPPGPYMNQQYMQLAQAAQQAMGGRGGRGGPMPGMPGMPQAQIAGGPGIRGGQGGFPQGGRGAPGGRGQPPMPGFPQGGRPGGPGVDMSVLSAAAPGQQKQMLGEALYPKIHEMQPELAGKITGMLLEMDNSELINLTADESALRAKVDEAMSVYDEYVKNKEGDGEKEAPKEESKEEKA</sequence>